<name>MAGA_PARM1</name>
<reference key="1">
    <citation type="journal article" date="1995" name="J. Biol. Chem.">
        <title>An iron-regulated gene, magA encoding an iron transport protein of Magnetospirillum sp. strain AMB-1.</title>
        <authorList>
            <person name="Nakamura C."/>
            <person name="Burgess G.J."/>
            <person name="Sode K."/>
            <person name="Matsunaga T."/>
        </authorList>
    </citation>
    <scope>NUCLEOTIDE SEQUENCE [GENOMIC DNA]</scope>
    <scope>FUNCTION AS A TRANSPORTER</scope>
    <source>
        <strain>ATCC 700264 / AMB-1</strain>
    </source>
</reference>
<reference key="2">
    <citation type="journal article" date="2005" name="DNA Res.">
        <title>Complete genome sequence of the facultative anaerobic magnetotactic bacterium Magnetospirillum sp. strain AMB-1.</title>
        <authorList>
            <person name="Matsunaga T."/>
            <person name="Okamura Y."/>
            <person name="Fukuda Y."/>
            <person name="Wahyudi A.T."/>
            <person name="Murase Y."/>
            <person name="Takeyama H."/>
        </authorList>
    </citation>
    <scope>NUCLEOTIDE SEQUENCE [LARGE SCALE GENOMIC DNA]</scope>
    <source>
        <strain>ATCC 700264 / AMB-1</strain>
    </source>
</reference>
<reference key="3">
    <citation type="journal article" date="1995" name="J. Biochem.">
        <title>Iron-regulated expression and membrane localization of the magA protein in Magnetospirillum sp. strain AMB-1.</title>
        <authorList>
            <person name="Nakamura C."/>
            <person name="Kikuchi T."/>
            <person name="Burgess J."/>
            <person name="Matsunaga T."/>
        </authorList>
    </citation>
    <scope>FUNCTION</scope>
    <scope>SUBCELLULAR LOCATION</scope>
    <scope>INDUCTION</scope>
    <source>
        <strain>ATCC 700264 / AMB-1</strain>
    </source>
</reference>
<protein>
    <recommendedName>
        <fullName>Iron transporter MagA</fullName>
    </recommendedName>
</protein>
<proteinExistence type="evidence at protein level"/>
<accession>Q2W031</accession>
<accession>Q50411</accession>
<keyword id="KW-0050">Antiport</keyword>
<keyword id="KW-0406">Ion transport</keyword>
<keyword id="KW-0408">Iron</keyword>
<keyword id="KW-0410">Iron transport</keyword>
<keyword id="KW-0472">Membrane</keyword>
<keyword id="KW-0812">Transmembrane</keyword>
<keyword id="KW-1133">Transmembrane helix</keyword>
<keyword id="KW-0813">Transport</keyword>
<evidence type="ECO:0000255" key="1"/>
<evidence type="ECO:0000269" key="2">
    <source>
    </source>
</evidence>
<evidence type="ECO:0000269" key="3">
    <source>
    </source>
</evidence>
<evidence type="ECO:0000305" key="4"/>
<organism>
    <name type="scientific">Paramagnetospirillum magneticum (strain ATCC 700264 / AMB-1)</name>
    <name type="common">Magnetospirillum magneticum</name>
    <dbReference type="NCBI Taxonomy" id="342108"/>
    <lineage>
        <taxon>Bacteria</taxon>
        <taxon>Pseudomonadati</taxon>
        <taxon>Pseudomonadota</taxon>
        <taxon>Alphaproteobacteria</taxon>
        <taxon>Rhodospirillales</taxon>
        <taxon>Magnetospirillaceae</taxon>
        <taxon>Paramagnetospirillum</taxon>
    </lineage>
</organism>
<feature type="chain" id="PRO_0000425661" description="Iron transporter MagA">
    <location>
        <begin position="1"/>
        <end position="434"/>
    </location>
</feature>
<feature type="transmembrane region" description="Helical" evidence="1">
    <location>
        <begin position="6"/>
        <end position="26"/>
    </location>
</feature>
<feature type="transmembrane region" description="Helical" evidence="1">
    <location>
        <begin position="31"/>
        <end position="51"/>
    </location>
</feature>
<feature type="transmembrane region" description="Helical" evidence="1">
    <location>
        <begin position="56"/>
        <end position="76"/>
    </location>
</feature>
<feature type="transmembrane region" description="Helical" evidence="1">
    <location>
        <begin position="86"/>
        <end position="106"/>
    </location>
</feature>
<feature type="transmembrane region" description="Helical" evidence="1">
    <location>
        <begin position="113"/>
        <end position="133"/>
    </location>
</feature>
<feature type="transmembrane region" description="Helical" evidence="1">
    <location>
        <begin position="176"/>
        <end position="196"/>
    </location>
</feature>
<feature type="transmembrane region" description="Helical" evidence="1">
    <location>
        <begin position="269"/>
        <end position="289"/>
    </location>
</feature>
<feature type="transmembrane region" description="Helical" evidence="1">
    <location>
        <begin position="294"/>
        <end position="314"/>
    </location>
</feature>
<feature type="transmembrane region" description="Helical" evidence="1">
    <location>
        <begin position="321"/>
        <end position="341"/>
    </location>
</feature>
<feature type="transmembrane region" description="Helical" evidence="1">
    <location>
        <begin position="357"/>
        <end position="377"/>
    </location>
</feature>
<dbReference type="EMBL" id="D32253">
    <property type="protein sequence ID" value="BAA06982.1"/>
    <property type="molecule type" value="Genomic_DNA"/>
</dbReference>
<dbReference type="EMBL" id="AP007255">
    <property type="protein sequence ID" value="BAE52794.1"/>
    <property type="molecule type" value="Genomic_DNA"/>
</dbReference>
<dbReference type="RefSeq" id="WP_011386344.1">
    <property type="nucleotide sequence ID" value="NC_007626.1"/>
</dbReference>
<dbReference type="SMR" id="Q2W031"/>
<dbReference type="STRING" id="342108.amb3990"/>
<dbReference type="TCDB" id="2.A.37.1.12">
    <property type="family name" value="the monovalent cation:proton antiporter-2 (cpa2) family"/>
</dbReference>
<dbReference type="KEGG" id="mag:amb3990"/>
<dbReference type="HOGENOM" id="CLU_005126_1_2_5"/>
<dbReference type="OrthoDB" id="9781411at2"/>
<dbReference type="Proteomes" id="UP000007058">
    <property type="component" value="Chromosome"/>
</dbReference>
<dbReference type="GO" id="GO:0016020">
    <property type="term" value="C:membrane"/>
    <property type="evidence" value="ECO:0007669"/>
    <property type="project" value="UniProtKB-SubCell"/>
</dbReference>
<dbReference type="GO" id="GO:0015297">
    <property type="term" value="F:antiporter activity"/>
    <property type="evidence" value="ECO:0007669"/>
    <property type="project" value="UniProtKB-KW"/>
</dbReference>
<dbReference type="GO" id="GO:0008324">
    <property type="term" value="F:monoatomic cation transmembrane transporter activity"/>
    <property type="evidence" value="ECO:0007669"/>
    <property type="project" value="InterPro"/>
</dbReference>
<dbReference type="GO" id="GO:0006826">
    <property type="term" value="P:iron ion transport"/>
    <property type="evidence" value="ECO:0007669"/>
    <property type="project" value="UniProtKB-KW"/>
</dbReference>
<dbReference type="GO" id="GO:1902600">
    <property type="term" value="P:proton transmembrane transport"/>
    <property type="evidence" value="ECO:0007669"/>
    <property type="project" value="InterPro"/>
</dbReference>
<dbReference type="Gene3D" id="1.20.1530.20">
    <property type="match status" value="1"/>
</dbReference>
<dbReference type="InterPro" id="IPR006153">
    <property type="entry name" value="Cation/H_exchanger_TM"/>
</dbReference>
<dbReference type="InterPro" id="IPR054983">
    <property type="entry name" value="FeTrans_MagA"/>
</dbReference>
<dbReference type="InterPro" id="IPR004771">
    <property type="entry name" value="K/H_exchanger"/>
</dbReference>
<dbReference type="InterPro" id="IPR038770">
    <property type="entry name" value="Na+/solute_symporter_sf"/>
</dbReference>
<dbReference type="NCBIfam" id="TIGR00932">
    <property type="entry name" value="2a37"/>
    <property type="match status" value="1"/>
</dbReference>
<dbReference type="NCBIfam" id="NF045626">
    <property type="entry name" value="FeTrans_MagA"/>
    <property type="match status" value="1"/>
</dbReference>
<dbReference type="PANTHER" id="PTHR42751">
    <property type="entry name" value="SODIUM/HYDROGEN EXCHANGER FAMILY/TRKA DOMAIN PROTEIN"/>
    <property type="match status" value="1"/>
</dbReference>
<dbReference type="PANTHER" id="PTHR42751:SF3">
    <property type="entry name" value="SODIUM_GLUTAMATE SYMPORTER"/>
    <property type="match status" value="1"/>
</dbReference>
<dbReference type="Pfam" id="PF00999">
    <property type="entry name" value="Na_H_Exchanger"/>
    <property type="match status" value="1"/>
</dbReference>
<sequence length="434" mass="46828">MELHHPELTYAAIVALAAVLCGGMMTRLKQPAVVGYILAGVVLGPSGFGLVSNRDAVATLAEFGVLMLLFVIGMKLDIIRFLEVWKTAIFTTVLQIAGSVGTALLLRHGLGWSLGLAVVLGCAVAVSSTAVVIKVLESSDELDTPVGRTTLGILIAQDMAVVPMMLVLESFETKALLPADMARVVLSVLFLVLLFWWLSKRRIDLPITARLSRDSDLATLSTLAWCFGTAAISGVLDLSPAYGAFLGGVVLGNSAQRDMLLKRAQPIGSVLLMVFFLSIGLLLDFKFIWKNLGTVLTLLAMVTLFKTALNVTALRLARQDWPSAFLAGVALAQIGEFSFLLAETGKAVKLISAQETKLVVAVTVLSLVLSPFWLFTMRRMHRVAAVHVHSFRDLVTRLYGDEARAFARTARRARVLVRRGSWRDDPNAGPGSGI</sequence>
<gene>
    <name type="primary">magA</name>
    <name type="ordered locus">amb3990</name>
</gene>
<comment type="function">
    <text evidence="2 3">Iron transporter, which is required for the synthesis of bacterial magnetic particles (BMPs). Probably involved in the transport of iron from the environment into the cytoplasm across the cell membrane, and then from the cytoplasm into the BMP lipid vesicle across the BMP membrane.</text>
</comment>
<comment type="subcellular location">
    <subcellularLocation>
        <location evidence="3">Membrane</location>
        <topology evidence="3">Multi-pass membrane protein</topology>
    </subcellularLocation>
    <text>Present in the cell and bacterial magnetic particle membranes.</text>
</comment>
<comment type="induction">
    <text evidence="3">Induced by low iron concentrations.</text>
</comment>
<comment type="similarity">
    <text evidence="4">Belongs to the monovalent cation:proton antiporter 2 (CPA2) transporter (TC 2.A.37) family.</text>
</comment>